<keyword id="KW-0027">Amidation</keyword>
<keyword id="KW-0903">Direct protein sequencing</keyword>
<keyword id="KW-1015">Disulfide bond</keyword>
<keyword id="KW-0872">Ion channel impairing toxin</keyword>
<keyword id="KW-0960">Knottin</keyword>
<keyword id="KW-0528">Neurotoxin</keyword>
<keyword id="KW-0638">Presynaptic neurotoxin</keyword>
<keyword id="KW-0964">Secreted</keyword>
<keyword id="KW-0732">Signal</keyword>
<keyword id="KW-0800">Toxin</keyword>
<keyword id="KW-0738">Voltage-gated sodium channel impairing toxin</keyword>
<evidence type="ECO:0000255" key="1"/>
<evidence type="ECO:0000269" key="2">
    <source>
    </source>
</evidence>
<evidence type="ECO:0000269" key="3">
    <source>
    </source>
</evidence>
<evidence type="ECO:0000269" key="4">
    <source>
    </source>
</evidence>
<evidence type="ECO:0000269" key="5">
    <source>
    </source>
</evidence>
<evidence type="ECO:0000269" key="6">
    <source>
    </source>
</evidence>
<evidence type="ECO:0000269" key="7">
    <source>
    </source>
</evidence>
<evidence type="ECO:0000305" key="8"/>
<comment type="function">
    <text evidence="2 3 4">Neurotoxin. Selectively blocks neuronal tetrodotoxin-sensitive voltage-gated sodium channels (Nav) with an IC(50) of 44.6 nM. Does not affect tetrodotoxin-resistant voltage-gated sodium channels or calcium channels.</text>
</comment>
<comment type="subunit">
    <text>Monomer.</text>
</comment>
<comment type="subcellular location">
    <subcellularLocation>
        <location evidence="3 4">Secreted</location>
    </subcellularLocation>
</comment>
<comment type="tissue specificity">
    <text evidence="3 4">Expressed by the venom gland.</text>
</comment>
<comment type="domain">
    <text>The presence of a 'disulfide through disulfide knot' structurally defines this protein as a knottin.</text>
</comment>
<comment type="mass spectrometry" mass="3988.58" method="Electrospray" evidence="3"/>
<comment type="toxic dose">
    <text evidence="3">LD(50) is 0.2 +-0.07 mg/kg by intraperitoneal injection into mice.</text>
</comment>
<comment type="miscellaneous">
    <text>Several genes are coding for Mu-theraphotoxin-Hhn1b for which the structure by NMR has been determined. The cross-references to PDB can be found in entry AC D2Y232.</text>
</comment>
<comment type="similarity">
    <text evidence="8">Belongs to the neurotoxin 10 (Hwtx-1) family. 22 (Htx-4) subfamily.</text>
</comment>
<accession>D2Y2D7</accession>
<accession>P83471</accession>
<name>H4A03_CYRHA</name>
<protein>
    <recommendedName>
        <fullName>Mu-theraphotoxin-Hhn1b 3</fullName>
        <shortName>Mu-TRTX-Hhn1b</shortName>
    </recommendedName>
    <alternativeName>
        <fullName>Hainantoxin-4.3</fullName>
    </alternativeName>
    <alternativeName>
        <fullName>Hainantoxin-IV.3</fullName>
        <shortName>HnTx-IV.3</shortName>
    </alternativeName>
    <alternativeName>
        <fullName>Peptide F8-18.88</fullName>
    </alternativeName>
</protein>
<sequence length="86" mass="9535">MKASMFLALTGLALLFVVCYASESEEKEFSNELLSSVLAVDDNSKGEERECLGFGKGCNPSNDQCCKSSNLVCSRKHRWCKYEIGK</sequence>
<organism>
    <name type="scientific">Cyriopagopus hainanus</name>
    <name type="common">Chinese bird spider</name>
    <name type="synonym">Haplopelma hainanum</name>
    <dbReference type="NCBI Taxonomy" id="209901"/>
    <lineage>
        <taxon>Eukaryota</taxon>
        <taxon>Metazoa</taxon>
        <taxon>Ecdysozoa</taxon>
        <taxon>Arthropoda</taxon>
        <taxon>Chelicerata</taxon>
        <taxon>Arachnida</taxon>
        <taxon>Araneae</taxon>
        <taxon>Mygalomorphae</taxon>
        <taxon>Theraphosidae</taxon>
        <taxon>Haplopelma</taxon>
    </lineage>
</organism>
<dbReference type="EMBL" id="GU293014">
    <property type="protein sequence ID" value="ADB56830.1"/>
    <property type="molecule type" value="mRNA"/>
</dbReference>
<dbReference type="BMRB" id="D2Y2D7"/>
<dbReference type="SMR" id="D2Y2D7"/>
<dbReference type="ArachnoServer" id="AS000340">
    <property type="toxin name" value="mu-theraphotoxin-Hhn1b"/>
</dbReference>
<dbReference type="GO" id="GO:0005576">
    <property type="term" value="C:extracellular region"/>
    <property type="evidence" value="ECO:0007669"/>
    <property type="project" value="UniProtKB-SubCell"/>
</dbReference>
<dbReference type="GO" id="GO:0044231">
    <property type="term" value="C:host cell presynaptic membrane"/>
    <property type="evidence" value="ECO:0007669"/>
    <property type="project" value="UniProtKB-KW"/>
</dbReference>
<dbReference type="GO" id="GO:0008200">
    <property type="term" value="F:ion channel inhibitor activity"/>
    <property type="evidence" value="ECO:0007669"/>
    <property type="project" value="InterPro"/>
</dbReference>
<dbReference type="GO" id="GO:0017080">
    <property type="term" value="F:sodium channel regulator activity"/>
    <property type="evidence" value="ECO:0007669"/>
    <property type="project" value="UniProtKB-KW"/>
</dbReference>
<dbReference type="GO" id="GO:0090729">
    <property type="term" value="F:toxin activity"/>
    <property type="evidence" value="ECO:0007669"/>
    <property type="project" value="UniProtKB-KW"/>
</dbReference>
<dbReference type="InterPro" id="IPR011696">
    <property type="entry name" value="Huwentoxin-1"/>
</dbReference>
<dbReference type="InterPro" id="IPR013140">
    <property type="entry name" value="Huwentoxin_CS1"/>
</dbReference>
<dbReference type="Pfam" id="PF07740">
    <property type="entry name" value="Toxin_12"/>
    <property type="match status" value="1"/>
</dbReference>
<dbReference type="SUPFAM" id="SSF57059">
    <property type="entry name" value="omega toxin-like"/>
    <property type="match status" value="1"/>
</dbReference>
<dbReference type="PROSITE" id="PS60021">
    <property type="entry name" value="HWTX_1"/>
    <property type="match status" value="1"/>
</dbReference>
<feature type="signal peptide" evidence="1">
    <location>
        <begin position="1"/>
        <end position="21"/>
    </location>
</feature>
<feature type="propeptide" id="PRO_0000400570" evidence="3 4 7">
    <location>
        <begin position="22"/>
        <end position="49"/>
    </location>
</feature>
<feature type="peptide" id="PRO_0000400571" description="Mu-theraphotoxin-Hhn1b 3" evidence="3 4 7">
    <location>
        <begin position="50"/>
        <end position="84"/>
    </location>
</feature>
<feature type="site" description="Interacts with channel">
    <location>
        <position position="76"/>
    </location>
</feature>
<feature type="site" description="Interacts with channel">
    <location>
        <position position="78"/>
    </location>
</feature>
<feature type="modified residue" description="Isoleucine amide" evidence="4 5">
    <location>
        <position position="84"/>
    </location>
</feature>
<feature type="disulfide bond" evidence="5">
    <location>
        <begin position="51"/>
        <end position="66"/>
    </location>
</feature>
<feature type="disulfide bond" evidence="5">
    <location>
        <begin position="58"/>
        <end position="73"/>
    </location>
</feature>
<feature type="disulfide bond" evidence="5">
    <location>
        <begin position="65"/>
        <end position="80"/>
    </location>
</feature>
<feature type="mutagenesis site" description="No important change in activity." evidence="5 6">
    <original>S</original>
    <variation>A</variation>
    <location>
        <position position="61"/>
    </location>
</feature>
<feature type="mutagenesis site" description="No important change in activity." evidence="5">
    <original>R</original>
    <variation>A</variation>
    <location>
        <position position="75"/>
    </location>
</feature>
<feature type="mutagenesis site" description="Important reduction in activity, without change of toxin conformation." evidence="5">
    <original>K</original>
    <variation>A</variation>
    <location>
        <position position="76"/>
    </location>
</feature>
<feature type="mutagenesis site" description="Important reduction in activity, without change of toxin conformation." evidence="5 6">
    <original>R</original>
    <variation>A</variation>
    <location>
        <position position="78"/>
    </location>
</feature>
<feature type="sequence conflict" description="In Ref. 3; AA sequence." evidence="8" ref="3">
    <original>SNDQ</original>
    <variation>DQSN</variation>
    <location>
        <begin position="61"/>
        <end position="64"/>
    </location>
</feature>
<reference key="1">
    <citation type="journal article" date="2010" name="J. Proteome Res.">
        <title>Molecular diversification of peptide toxins from the tarantula Haplopelma hainanum (Ornithoctonus hainana) venom based on transcriptomic, peptidomic, and genomic analyses.</title>
        <authorList>
            <person name="Tang X."/>
            <person name="Zhang Y."/>
            <person name="Hu W."/>
            <person name="Xu D."/>
            <person name="Tao H."/>
            <person name="Yang X."/>
            <person name="Li Y."/>
            <person name="Jiang L."/>
            <person name="Liang S."/>
        </authorList>
    </citation>
    <scope>NUCLEOTIDE SEQUENCE [LARGE SCALE MRNA]</scope>
    <scope>PROTEIN SEQUENCE OF 50-84</scope>
    <scope>IDENTIFICATION BY MASS SPECTROMETRY</scope>
    <source>
        <tissue>Venom</tissue>
        <tissue>Venom gland</tissue>
    </source>
</reference>
<reference key="2">
    <citation type="journal article" date="2003" name="Cell. Mol. Life Sci.">
        <title>Isolation and characterization of hainantoxin-IV, a novel antagonist of tetrodotoxin-sensitive sodium channels from the Chinese bird spider Selenocosmia hainana.</title>
        <authorList>
            <person name="Liu Z.-H."/>
            <person name="Dai J."/>
            <person name="Chen Z."/>
            <person name="Hu W."/>
            <person name="Xiao Y."/>
            <person name="Liang S.-P."/>
        </authorList>
    </citation>
    <scope>PROTEIN SEQUENCE OF 50-84</scope>
    <scope>FUNCTION</scope>
    <scope>SUBCELLULAR LOCATION</scope>
    <scope>TISSUE SPECIFICITY</scope>
    <scope>MASS SPECTROMETRY</scope>
    <scope>TOXIC DOSE</scope>
    <scope>DISULFIDE BONDS</scope>
</reference>
<reference key="3">
    <citation type="journal article" date="2003" name="Eur. J. Pharmacol.">
        <title>Inhibition of neuronal tetrodotoxin-sensitive Na+ channels by two spider toxins: hainantoxin-III and hainantoxin-IV.</title>
        <authorList>
            <person name="Xiao Y."/>
            <person name="Liang S."/>
        </authorList>
    </citation>
    <scope>PROTEIN SEQUENCE OF 50-84</scope>
    <scope>FUNCTION</scope>
    <scope>SUBCELLULAR LOCATION</scope>
    <scope>TISSUE SPECIFICITY</scope>
    <scope>AMIDATION AT ILE-84</scope>
    <source>
        <tissue>Venom</tissue>
    </source>
</reference>
<reference key="4">
    <citation type="journal article" date="2003" name="Sheng Wu Hua Xue Yu Sheng Wu Wu Li Xue Bao">
        <title>Inhibition of sodium channels in rat dorsal root ganglion neurons by Hainantoxin-IV, a novel spider toxin.</title>
        <authorList>
            <person name="Xiao Y.-C."/>
            <person name="Liang S.-P."/>
        </authorList>
    </citation>
    <scope>FUNCTION</scope>
</reference>
<reference key="5">
    <citation type="journal article" date="2002" name="Sheng Wu Hua Xue Yu Sheng Wu Wu Li Xue Bao">
        <title>Synthesis and oxidative refolding of hainantoxin-IV.</title>
        <authorList>
            <person name="Liu Z.-H."/>
            <person name="Chen P."/>
            <person name="Liang S.-P."/>
        </authorList>
    </citation>
    <scope>SYNTHESIS</scope>
</reference>
<reference key="6">
    <citation type="journal article" date="2005" name="Sheng Wu Gong Cheng Xue Bao">
        <title>Solid-phase synthesis and biological characterization of S12A-HNTX-IV and R29A-HNTX-IV: two mutants of hainantoxin-IV.</title>
        <authorList>
            <person name="Xu X."/>
            <person name="Xiong X."/>
            <person name="Li D.L."/>
            <person name="Xiao Y.C."/>
            <person name="Wang X.C."/>
            <person name="Liang S.P."/>
        </authorList>
    </citation>
    <scope>SYNTHESIS</scope>
    <scope>MUTAGENESIS OF SER-61 AND ARG-78</scope>
</reference>
<reference key="7">
    <citation type="journal article" date="2004" name="J. Biol. Chem.">
        <title>Structure-activity relationships of hainantoxin-IV and structure determination of active and inactive sodium channel blockers.</title>
        <authorList>
            <person name="Li D."/>
            <person name="Xiao Y."/>
            <person name="Xu X."/>
            <person name="Xiong X."/>
            <person name="Lu S."/>
            <person name="Liu Z."/>
            <person name="Zhu Q."/>
            <person name="Wang M."/>
            <person name="Gu X."/>
            <person name="Liang S."/>
        </authorList>
    </citation>
    <scope>STRUCTURE BY NMR OF 50-84</scope>
    <scope>DISULFIDE BONDS</scope>
    <scope>AMIDATION AT ILE-84</scope>
    <scope>MUTAGENESIS OF SER-61; ARG-75; LYS-76 AND ARG-78</scope>
</reference>
<proteinExistence type="evidence at protein level"/>